<geneLocation type="chloroplast"/>
<organism>
    <name type="scientific">Tupiella akineta</name>
    <name type="common">Green alga</name>
    <name type="synonym">Pseudendoclonium akinetum</name>
    <dbReference type="NCBI Taxonomy" id="160070"/>
    <lineage>
        <taxon>Eukaryota</taxon>
        <taxon>Viridiplantae</taxon>
        <taxon>Chlorophyta</taxon>
        <taxon>Ulvophyceae</taxon>
        <taxon>OUU clade</taxon>
        <taxon>Ulotrichales</taxon>
        <taxon>Tupiellaceae</taxon>
        <taxon>Tupiella</taxon>
    </lineage>
</organism>
<comment type="function">
    <text evidence="1">DNA-dependent RNA polymerase catalyzes the transcription of DNA into RNA using the four ribonucleoside triphosphates as substrates.</text>
</comment>
<comment type="catalytic activity">
    <reaction evidence="1">
        <text>RNA(n) + a ribonucleoside 5'-triphosphate = RNA(n+1) + diphosphate</text>
        <dbReference type="Rhea" id="RHEA:21248"/>
        <dbReference type="Rhea" id="RHEA-COMP:14527"/>
        <dbReference type="Rhea" id="RHEA-COMP:17342"/>
        <dbReference type="ChEBI" id="CHEBI:33019"/>
        <dbReference type="ChEBI" id="CHEBI:61557"/>
        <dbReference type="ChEBI" id="CHEBI:140395"/>
        <dbReference type="EC" id="2.7.7.6"/>
    </reaction>
</comment>
<comment type="cofactor">
    <cofactor evidence="1">
        <name>Mg(2+)</name>
        <dbReference type="ChEBI" id="CHEBI:18420"/>
    </cofactor>
    <text evidence="1">Binds 1 Mg(2+) ion per subunit.</text>
</comment>
<comment type="cofactor">
    <cofactor evidence="1">
        <name>Zn(2+)</name>
        <dbReference type="ChEBI" id="CHEBI:29105"/>
    </cofactor>
    <text evidence="1">Binds 1 Zn(2+) ion per subunit.</text>
</comment>
<comment type="subunit">
    <text evidence="1">In plastids the minimal PEP RNA polymerase catalytic core is composed of four subunits: alpha, beta, beta', and beta''. When a (nuclear-encoded) sigma factor is associated with the core the holoenzyme is formed, which can initiate transcription.</text>
</comment>
<comment type="subcellular location">
    <subcellularLocation>
        <location evidence="1">Plastid</location>
        <location evidence="1">Chloroplast</location>
    </subcellularLocation>
</comment>
<comment type="similarity">
    <text evidence="1">Belongs to the RNA polymerase beta' chain family. RpoC1 subfamily.</text>
</comment>
<sequence length="1578" mass="183291">MSSDLKYSLSSEPPQPQVQSPLLKILKGEVSETTELKKLHSFRLCLSSPKIIKQWAQRTLPNGEIVGSITNAQTVNYKTLKPEKGGLFCERVFGPVKDFYCSCGKQKTKQHPKVCPTCGVQYISSQSRRYKMGYIELVSPVTHIWYLKSSPSYISLLLNLKKKNLEALTYCSENLSLNIKSFQNELLFQNVLHLLKANPFALEKGLKKRKKRFLVNSNWFSFIFDNSYLIKANSGFQLKVKDFPFFLITKNQNLQNFMGVCSQSANGNEQILPEMEKQGKNTFQFSPFLTTVQKHGSSENGSFPELKREKDELELFKLIDSFSSKSPSKKKDFFRSEILTAFYKKYSKFHFSRFRSNKKSFLISLFSSSNNWYFNKNQNIGYFSIFNKNFKIFFSLLNYQILLKTIDKNSLANLLSPLFDNYLNDDSQVLFDDSIKKLNLTKNFRSNEDQELSTLLNSCFFLNKIGAIAQSPFSLAFYTQKSEKFYCFSPSFLNPFEKDSLSGKIFSLKKKKILPSQKMFELKPLTLFCSKKTKRNEVESENPNSNHMLPFIAFSKKQRCEEKADFFKQLRMIELESEKSRSPKDLLFLNKFPFKNEKKLKYNLQKRNKLHTLKNPIGNFKFRKYFSLRLDSSLKRSLLIYQIKNFKNGFEHSDFYSENQTSTNFTKFLVSRELEKSSKFSNSLFSFENFAQLLIFIFDFPAALERQRQSFSLRSYSKSANFRSQTSARGEVGGNFNLEVKQSQNYFLDWKLTNNYRNFYQSSEIQNLNCFFISNFLVKNAIPVSPLSLEQFVFNNETQKNLHLGNEDSRFFANLKKPIKKLGLLKNSFLAETLANAKANAHNLKENRTPVIQDKENESQTFSQLFFDQIDQKEGSSLKSKDLNFTNWNNKKITRFIELLEKTLFLKKPGLVNNYYTISQSLQWPCQKDWARFLNYMTNTADKTDSLIPSYLERGISFDLVLTGAGSIKKLLSLFTPMGKKASIEIVAKQINGTLLKLNRDIKRLEDFFKFEIFFIDDQEIIEKVFMKLVILRSLRSKALRRLKVLRPFKGSHVLPEWMVLSVLPILPPALRPIIPLDSQQVAVSDLNKLYQTVLFRNKRVQRFYNDYYSLNFSEEMRYAQRLLQEAVDALIENGKGDSAAITASNNRPLKSLSDMIKGKKGRFRQNLLGKRVDYSGRSVIVVGPKLRLHECGLPKEMAIELFQPFLIRRLIFKEVATNFISAKKLIKSNPESILDILREVMENRPVLLNRAPTLHRLGIQAFQPKLISGRAILLHPLVCAAFNADFDGDQMAVHIPLSFQACAEAWKLMGSRNNLLSPATGEPIILPSQDMVLGCYYLTTLDRVKIKQKLSQSSFLFPFLISKQGVHENLSTISSNSKGIENWILKKPSQKSEIRTLSSFYEINESERATFESKTNDTSILKLQDKKRRETLTFKRNRLSPVDTKLHLMDLSKNKNQNLFLNRFEKRANCKVWSDSNKYYSNWDQVLQSLNQQLIDLHSPIWLRWNFYFEFVLKKESFLEIRLDKYGNSVYINPNYQSYSNSKLEKIVFYIRTTPGRVLMNKLIFEALNKPSLKKSF</sequence>
<protein>
    <recommendedName>
        <fullName evidence="1">DNA-directed RNA polymerase subunit beta'</fullName>
        <ecNumber evidence="1">2.7.7.6</ecNumber>
    </recommendedName>
    <alternativeName>
        <fullName evidence="1">PEP</fullName>
    </alternativeName>
    <alternativeName>
        <fullName evidence="1">Plastid-encoded RNA polymerase subunit beta'</fullName>
        <shortName evidence="1">RNA polymerase subunit beta'</shortName>
    </alternativeName>
</protein>
<dbReference type="EC" id="2.7.7.6" evidence="1"/>
<dbReference type="EMBL" id="AY835431">
    <property type="protein sequence ID" value="AAV80599.1"/>
    <property type="molecule type" value="Genomic_DNA"/>
</dbReference>
<dbReference type="RefSeq" id="YP_636175.1">
    <property type="nucleotide sequence ID" value="NC_008114.1"/>
</dbReference>
<dbReference type="SMR" id="Q3ZJ92"/>
<dbReference type="GeneID" id="4108779"/>
<dbReference type="GO" id="GO:0009507">
    <property type="term" value="C:chloroplast"/>
    <property type="evidence" value="ECO:0007669"/>
    <property type="project" value="UniProtKB-SubCell"/>
</dbReference>
<dbReference type="GO" id="GO:0000428">
    <property type="term" value="C:DNA-directed RNA polymerase complex"/>
    <property type="evidence" value="ECO:0007669"/>
    <property type="project" value="UniProtKB-KW"/>
</dbReference>
<dbReference type="GO" id="GO:0005739">
    <property type="term" value="C:mitochondrion"/>
    <property type="evidence" value="ECO:0007669"/>
    <property type="project" value="GOC"/>
</dbReference>
<dbReference type="GO" id="GO:0003677">
    <property type="term" value="F:DNA binding"/>
    <property type="evidence" value="ECO:0007669"/>
    <property type="project" value="UniProtKB-UniRule"/>
</dbReference>
<dbReference type="GO" id="GO:0003899">
    <property type="term" value="F:DNA-directed RNA polymerase activity"/>
    <property type="evidence" value="ECO:0007669"/>
    <property type="project" value="UniProtKB-UniRule"/>
</dbReference>
<dbReference type="GO" id="GO:0000287">
    <property type="term" value="F:magnesium ion binding"/>
    <property type="evidence" value="ECO:0007669"/>
    <property type="project" value="UniProtKB-UniRule"/>
</dbReference>
<dbReference type="GO" id="GO:0008270">
    <property type="term" value="F:zinc ion binding"/>
    <property type="evidence" value="ECO:0007669"/>
    <property type="project" value="UniProtKB-UniRule"/>
</dbReference>
<dbReference type="GO" id="GO:0006351">
    <property type="term" value="P:DNA-templated transcription"/>
    <property type="evidence" value="ECO:0007669"/>
    <property type="project" value="UniProtKB-UniRule"/>
</dbReference>
<dbReference type="Gene3D" id="1.10.40.90">
    <property type="match status" value="1"/>
</dbReference>
<dbReference type="Gene3D" id="2.40.40.20">
    <property type="match status" value="1"/>
</dbReference>
<dbReference type="Gene3D" id="4.10.860.120">
    <property type="entry name" value="RNA polymerase II, clamp domain"/>
    <property type="match status" value="1"/>
</dbReference>
<dbReference type="Gene3D" id="1.10.274.100">
    <property type="entry name" value="RNA polymerase Rpb1, domain 3"/>
    <property type="match status" value="1"/>
</dbReference>
<dbReference type="HAMAP" id="MF_01323">
    <property type="entry name" value="RNApol_bact_RpoC1"/>
    <property type="match status" value="1"/>
</dbReference>
<dbReference type="InterPro" id="IPR045867">
    <property type="entry name" value="DNA-dir_RpoC_beta_prime"/>
</dbReference>
<dbReference type="InterPro" id="IPR000722">
    <property type="entry name" value="RNA_pol_asu"/>
</dbReference>
<dbReference type="InterPro" id="IPR006592">
    <property type="entry name" value="RNA_pol_N"/>
</dbReference>
<dbReference type="InterPro" id="IPR007080">
    <property type="entry name" value="RNA_pol_Rpb1_1"/>
</dbReference>
<dbReference type="InterPro" id="IPR007066">
    <property type="entry name" value="RNA_pol_Rpb1_3"/>
</dbReference>
<dbReference type="InterPro" id="IPR042102">
    <property type="entry name" value="RNA_pol_Rpb1_3_sf"/>
</dbReference>
<dbReference type="InterPro" id="IPR044893">
    <property type="entry name" value="RNA_pol_Rpb1_clamp_domain"/>
</dbReference>
<dbReference type="InterPro" id="IPR034678">
    <property type="entry name" value="RNApol_RpoC1"/>
</dbReference>
<dbReference type="PANTHER" id="PTHR19376">
    <property type="entry name" value="DNA-DIRECTED RNA POLYMERASE"/>
    <property type="match status" value="1"/>
</dbReference>
<dbReference type="PANTHER" id="PTHR19376:SF54">
    <property type="entry name" value="DNA-DIRECTED RNA POLYMERASE SUBUNIT BETA"/>
    <property type="match status" value="1"/>
</dbReference>
<dbReference type="Pfam" id="PF04997">
    <property type="entry name" value="RNA_pol_Rpb1_1"/>
    <property type="match status" value="2"/>
</dbReference>
<dbReference type="Pfam" id="PF00623">
    <property type="entry name" value="RNA_pol_Rpb1_2"/>
    <property type="match status" value="2"/>
</dbReference>
<dbReference type="Pfam" id="PF04983">
    <property type="entry name" value="RNA_pol_Rpb1_3"/>
    <property type="match status" value="1"/>
</dbReference>
<dbReference type="SMART" id="SM00663">
    <property type="entry name" value="RPOLA_N"/>
    <property type="match status" value="1"/>
</dbReference>
<dbReference type="SUPFAM" id="SSF64484">
    <property type="entry name" value="beta and beta-prime subunits of DNA dependent RNA-polymerase"/>
    <property type="match status" value="2"/>
</dbReference>
<keyword id="KW-0150">Chloroplast</keyword>
<keyword id="KW-0240">DNA-directed RNA polymerase</keyword>
<keyword id="KW-0460">Magnesium</keyword>
<keyword id="KW-0479">Metal-binding</keyword>
<keyword id="KW-0548">Nucleotidyltransferase</keyword>
<keyword id="KW-0934">Plastid</keyword>
<keyword id="KW-0804">Transcription</keyword>
<keyword id="KW-0808">Transferase</keyword>
<keyword id="KW-0862">Zinc</keyword>
<accession>Q3ZJ92</accession>
<evidence type="ECO:0000255" key="1">
    <source>
        <dbReference type="HAMAP-Rule" id="MF_01323"/>
    </source>
</evidence>
<reference key="1">
    <citation type="journal article" date="2005" name="Mol. Biol. Evol.">
        <title>The chloroplast genome sequence of the green alga Pseudendoclonium akinetum (Ulvophyceae) reveals unusual structural features and new insights into the branching order of chlorophyte lineages.</title>
        <authorList>
            <person name="Pombert J.-F."/>
            <person name="Otis C."/>
            <person name="Lemieux C."/>
            <person name="Turmel M."/>
        </authorList>
    </citation>
    <scope>NUCLEOTIDE SEQUENCE [LARGE SCALE GENOMIC DNA]</scope>
    <source>
        <strain>UTEX 1912</strain>
    </source>
</reference>
<feature type="chain" id="PRO_0000353513" description="DNA-directed RNA polymerase subunit beta'">
    <location>
        <begin position="1"/>
        <end position="1578"/>
    </location>
</feature>
<feature type="binding site" evidence="1">
    <location>
        <position position="101"/>
    </location>
    <ligand>
        <name>Zn(2+)</name>
        <dbReference type="ChEBI" id="CHEBI:29105"/>
    </ligand>
</feature>
<feature type="binding site" evidence="1">
    <location>
        <position position="103"/>
    </location>
    <ligand>
        <name>Zn(2+)</name>
        <dbReference type="ChEBI" id="CHEBI:29105"/>
    </ligand>
</feature>
<feature type="binding site" evidence="1">
    <location>
        <position position="115"/>
    </location>
    <ligand>
        <name>Zn(2+)</name>
        <dbReference type="ChEBI" id="CHEBI:29105"/>
    </ligand>
</feature>
<feature type="binding site" evidence="1">
    <location>
        <position position="118"/>
    </location>
    <ligand>
        <name>Zn(2+)</name>
        <dbReference type="ChEBI" id="CHEBI:29105"/>
    </ligand>
</feature>
<feature type="binding site" evidence="1">
    <location>
        <position position="1286"/>
    </location>
    <ligand>
        <name>Mg(2+)</name>
        <dbReference type="ChEBI" id="CHEBI:18420"/>
    </ligand>
</feature>
<feature type="binding site" evidence="1">
    <location>
        <position position="1288"/>
    </location>
    <ligand>
        <name>Mg(2+)</name>
        <dbReference type="ChEBI" id="CHEBI:18420"/>
    </ligand>
</feature>
<feature type="binding site" evidence="1">
    <location>
        <position position="1290"/>
    </location>
    <ligand>
        <name>Mg(2+)</name>
        <dbReference type="ChEBI" id="CHEBI:18420"/>
    </ligand>
</feature>
<proteinExistence type="inferred from homology"/>
<gene>
    <name evidence="1" type="primary">rpoC1</name>
</gene>
<name>RPOC1_TUPAK</name>